<accession>O97069</accession>
<accession>A0A0B4KFC7</accession>
<accession>C0HDN4</accession>
<accession>Q9VI41</accession>
<proteinExistence type="evidence at transcript level"/>
<reference key="1">
    <citation type="submission" date="1999-01" db="EMBL/GenBank/DDBJ databases">
        <title>Complete sequence of the Antennapedia complex of Drosophila.</title>
        <authorList>
            <person name="Celniker S.E."/>
            <person name="Pfeiffer B."/>
            <person name="Knafels J."/>
            <person name="Martin C.H."/>
            <person name="Mayeda C.A."/>
            <person name="Palazzolo M.J."/>
        </authorList>
    </citation>
    <scope>NUCLEOTIDE SEQUENCE [GENOMIC DNA]</scope>
    <source>
        <strain>Berkeley</strain>
    </source>
</reference>
<reference key="2">
    <citation type="journal article" date="2000" name="Science">
        <title>The genome sequence of Drosophila melanogaster.</title>
        <authorList>
            <person name="Adams M.D."/>
            <person name="Celniker S.E."/>
            <person name="Holt R.A."/>
            <person name="Evans C.A."/>
            <person name="Gocayne J.D."/>
            <person name="Amanatides P.G."/>
            <person name="Scherer S.E."/>
            <person name="Li P.W."/>
            <person name="Hoskins R.A."/>
            <person name="Galle R.F."/>
            <person name="George R.A."/>
            <person name="Lewis S.E."/>
            <person name="Richards S."/>
            <person name="Ashburner M."/>
            <person name="Henderson S.N."/>
            <person name="Sutton G.G."/>
            <person name="Wortman J.R."/>
            <person name="Yandell M.D."/>
            <person name="Zhang Q."/>
            <person name="Chen L.X."/>
            <person name="Brandon R.C."/>
            <person name="Rogers Y.-H.C."/>
            <person name="Blazej R.G."/>
            <person name="Champe M."/>
            <person name="Pfeiffer B.D."/>
            <person name="Wan K.H."/>
            <person name="Doyle C."/>
            <person name="Baxter E.G."/>
            <person name="Helt G."/>
            <person name="Nelson C.R."/>
            <person name="Miklos G.L.G."/>
            <person name="Abril J.F."/>
            <person name="Agbayani A."/>
            <person name="An H.-J."/>
            <person name="Andrews-Pfannkoch C."/>
            <person name="Baldwin D."/>
            <person name="Ballew R.M."/>
            <person name="Basu A."/>
            <person name="Baxendale J."/>
            <person name="Bayraktaroglu L."/>
            <person name="Beasley E.M."/>
            <person name="Beeson K.Y."/>
            <person name="Benos P.V."/>
            <person name="Berman B.P."/>
            <person name="Bhandari D."/>
            <person name="Bolshakov S."/>
            <person name="Borkova D."/>
            <person name="Botchan M.R."/>
            <person name="Bouck J."/>
            <person name="Brokstein P."/>
            <person name="Brottier P."/>
            <person name="Burtis K.C."/>
            <person name="Busam D.A."/>
            <person name="Butler H."/>
            <person name="Cadieu E."/>
            <person name="Center A."/>
            <person name="Chandra I."/>
            <person name="Cherry J.M."/>
            <person name="Cawley S."/>
            <person name="Dahlke C."/>
            <person name="Davenport L.B."/>
            <person name="Davies P."/>
            <person name="de Pablos B."/>
            <person name="Delcher A."/>
            <person name="Deng Z."/>
            <person name="Mays A.D."/>
            <person name="Dew I."/>
            <person name="Dietz S.M."/>
            <person name="Dodson K."/>
            <person name="Doup L.E."/>
            <person name="Downes M."/>
            <person name="Dugan-Rocha S."/>
            <person name="Dunkov B.C."/>
            <person name="Dunn P."/>
            <person name="Durbin K.J."/>
            <person name="Evangelista C.C."/>
            <person name="Ferraz C."/>
            <person name="Ferriera S."/>
            <person name="Fleischmann W."/>
            <person name="Fosler C."/>
            <person name="Gabrielian A.E."/>
            <person name="Garg N.S."/>
            <person name="Gelbart W.M."/>
            <person name="Glasser K."/>
            <person name="Glodek A."/>
            <person name="Gong F."/>
            <person name="Gorrell J.H."/>
            <person name="Gu Z."/>
            <person name="Guan P."/>
            <person name="Harris M."/>
            <person name="Harris N.L."/>
            <person name="Harvey D.A."/>
            <person name="Heiman T.J."/>
            <person name="Hernandez J.R."/>
            <person name="Houck J."/>
            <person name="Hostin D."/>
            <person name="Houston K.A."/>
            <person name="Howland T.J."/>
            <person name="Wei M.-H."/>
            <person name="Ibegwam C."/>
            <person name="Jalali M."/>
            <person name="Kalush F."/>
            <person name="Karpen G.H."/>
            <person name="Ke Z."/>
            <person name="Kennison J.A."/>
            <person name="Ketchum K.A."/>
            <person name="Kimmel B.E."/>
            <person name="Kodira C.D."/>
            <person name="Kraft C.L."/>
            <person name="Kravitz S."/>
            <person name="Kulp D."/>
            <person name="Lai Z."/>
            <person name="Lasko P."/>
            <person name="Lei Y."/>
            <person name="Levitsky A.A."/>
            <person name="Li J.H."/>
            <person name="Li Z."/>
            <person name="Liang Y."/>
            <person name="Lin X."/>
            <person name="Liu X."/>
            <person name="Mattei B."/>
            <person name="McIntosh T.C."/>
            <person name="McLeod M.P."/>
            <person name="McPherson D."/>
            <person name="Merkulov G."/>
            <person name="Milshina N.V."/>
            <person name="Mobarry C."/>
            <person name="Morris J."/>
            <person name="Moshrefi A."/>
            <person name="Mount S.M."/>
            <person name="Moy M."/>
            <person name="Murphy B."/>
            <person name="Murphy L."/>
            <person name="Muzny D.M."/>
            <person name="Nelson D.L."/>
            <person name="Nelson D.R."/>
            <person name="Nelson K.A."/>
            <person name="Nixon K."/>
            <person name="Nusskern D.R."/>
            <person name="Pacleb J.M."/>
            <person name="Palazzolo M."/>
            <person name="Pittman G.S."/>
            <person name="Pan S."/>
            <person name="Pollard J."/>
            <person name="Puri V."/>
            <person name="Reese M.G."/>
            <person name="Reinert K."/>
            <person name="Remington K."/>
            <person name="Saunders R.D.C."/>
            <person name="Scheeler F."/>
            <person name="Shen H."/>
            <person name="Shue B.C."/>
            <person name="Siden-Kiamos I."/>
            <person name="Simpson M."/>
            <person name="Skupski M.P."/>
            <person name="Smith T.J."/>
            <person name="Spier E."/>
            <person name="Spradling A.C."/>
            <person name="Stapleton M."/>
            <person name="Strong R."/>
            <person name="Sun E."/>
            <person name="Svirskas R."/>
            <person name="Tector C."/>
            <person name="Turner R."/>
            <person name="Venter E."/>
            <person name="Wang A.H."/>
            <person name="Wang X."/>
            <person name="Wang Z.-Y."/>
            <person name="Wassarman D.A."/>
            <person name="Weinstock G.M."/>
            <person name="Weissenbach J."/>
            <person name="Williams S.M."/>
            <person name="Woodage T."/>
            <person name="Worley K.C."/>
            <person name="Wu D."/>
            <person name="Yang S."/>
            <person name="Yao Q.A."/>
            <person name="Ye J."/>
            <person name="Yeh R.-F."/>
            <person name="Zaveri J.S."/>
            <person name="Zhan M."/>
            <person name="Zhang G."/>
            <person name="Zhao Q."/>
            <person name="Zheng L."/>
            <person name="Zheng X.H."/>
            <person name="Zhong F.N."/>
            <person name="Zhong W."/>
            <person name="Zhou X."/>
            <person name="Zhu S.C."/>
            <person name="Zhu X."/>
            <person name="Smith H.O."/>
            <person name="Gibbs R.A."/>
            <person name="Myers E.W."/>
            <person name="Rubin G.M."/>
            <person name="Venter J.C."/>
        </authorList>
    </citation>
    <scope>NUCLEOTIDE SEQUENCE [LARGE SCALE GENOMIC DNA]</scope>
    <source>
        <strain>Berkeley</strain>
    </source>
</reference>
<reference key="3">
    <citation type="journal article" date="2002" name="Genome Biol.">
        <title>Annotation of the Drosophila melanogaster euchromatic genome: a systematic review.</title>
        <authorList>
            <person name="Misra S."/>
            <person name="Crosby M.A."/>
            <person name="Mungall C.J."/>
            <person name="Matthews B.B."/>
            <person name="Campbell K.S."/>
            <person name="Hradecky P."/>
            <person name="Huang Y."/>
            <person name="Kaminker J.S."/>
            <person name="Millburn G.H."/>
            <person name="Prochnik S.E."/>
            <person name="Smith C.D."/>
            <person name="Tupy J.L."/>
            <person name="Whitfield E.J."/>
            <person name="Bayraktaroglu L."/>
            <person name="Berman B.P."/>
            <person name="Bettencourt B.R."/>
            <person name="Celniker S.E."/>
            <person name="de Grey A.D.N.J."/>
            <person name="Drysdale R.A."/>
            <person name="Harris N.L."/>
            <person name="Richter J."/>
            <person name="Russo S."/>
            <person name="Schroeder A.J."/>
            <person name="Shu S.Q."/>
            <person name="Stapleton M."/>
            <person name="Yamada C."/>
            <person name="Ashburner M."/>
            <person name="Gelbart W.M."/>
            <person name="Rubin G.M."/>
            <person name="Lewis S.E."/>
        </authorList>
    </citation>
    <scope>GENOME REANNOTATION</scope>
    <source>
        <strain>Berkeley</strain>
    </source>
</reference>
<reference key="4">
    <citation type="submission" date="2009-02" db="EMBL/GenBank/DDBJ databases">
        <authorList>
            <person name="Carlson J.W."/>
            <person name="Booth B."/>
            <person name="Frise E."/>
            <person name="Sandler J."/>
            <person name="Wan K.H."/>
            <person name="Yu C."/>
            <person name="Celniker S.E."/>
        </authorList>
    </citation>
    <scope>NUCLEOTIDE SEQUENCE [LARGE SCALE MRNA]</scope>
    <source>
        <strain>Berkeley</strain>
    </source>
</reference>
<keyword id="KW-0028">Amino-acid biosynthesis</keyword>
<keyword id="KW-0055">Arginine biosynthesis</keyword>
<keyword id="KW-0067">ATP-binding</keyword>
<keyword id="KW-0436">Ligase</keyword>
<keyword id="KW-0547">Nucleotide-binding</keyword>
<keyword id="KW-1185">Reference proteome</keyword>
<keyword id="KW-0835">Urea cycle</keyword>
<comment type="catalytic activity">
    <reaction>
        <text>L-citrulline + L-aspartate + ATP = 2-(N(omega)-L-arginino)succinate + AMP + diphosphate + H(+)</text>
        <dbReference type="Rhea" id="RHEA:10932"/>
        <dbReference type="ChEBI" id="CHEBI:15378"/>
        <dbReference type="ChEBI" id="CHEBI:29991"/>
        <dbReference type="ChEBI" id="CHEBI:30616"/>
        <dbReference type="ChEBI" id="CHEBI:33019"/>
        <dbReference type="ChEBI" id="CHEBI:57472"/>
        <dbReference type="ChEBI" id="CHEBI:57743"/>
        <dbReference type="ChEBI" id="CHEBI:456215"/>
        <dbReference type="EC" id="6.3.4.5"/>
    </reaction>
</comment>
<comment type="pathway">
    <text>Amino-acid biosynthesis; L-arginine biosynthesis; L-arginine from L-ornithine and carbamoyl phosphate: step 2/3.</text>
</comment>
<comment type="pathway">
    <text>Nitrogen metabolism; urea cycle; (N(omega)-L-arginino)succinate from L-aspartate and L-citrulline: step 1/1.</text>
</comment>
<comment type="subunit">
    <text evidence="1">Homotetramer.</text>
</comment>
<comment type="similarity">
    <text evidence="2">Belongs to the argininosuccinate synthase family. Type 1 subfamily.</text>
</comment>
<evidence type="ECO:0000250" key="1"/>
<evidence type="ECO:0000305" key="2"/>
<evidence type="ECO:0000312" key="3">
    <source>
        <dbReference type="FlyBase" id="FBgn0026565"/>
    </source>
</evidence>
<protein>
    <recommendedName>
        <fullName>Argininosuccinate synthase</fullName>
        <ecNumber>6.3.4.5</ecNumber>
    </recommendedName>
    <alternativeName>
        <fullName>Citrulline--aspartate ligase</fullName>
    </alternativeName>
</protein>
<gene>
    <name evidence="3" type="primary">Ass</name>
    <name evidence="3" type="ORF">CG1315</name>
</gene>
<organism>
    <name type="scientific">Drosophila melanogaster</name>
    <name type="common">Fruit fly</name>
    <dbReference type="NCBI Taxonomy" id="7227"/>
    <lineage>
        <taxon>Eukaryota</taxon>
        <taxon>Metazoa</taxon>
        <taxon>Ecdysozoa</taxon>
        <taxon>Arthropoda</taxon>
        <taxon>Hexapoda</taxon>
        <taxon>Insecta</taxon>
        <taxon>Pterygota</taxon>
        <taxon>Neoptera</taxon>
        <taxon>Endopterygota</taxon>
        <taxon>Diptera</taxon>
        <taxon>Brachycera</taxon>
        <taxon>Muscomorpha</taxon>
        <taxon>Ephydroidea</taxon>
        <taxon>Drosophilidae</taxon>
        <taxon>Drosophila</taxon>
        <taxon>Sophophora</taxon>
    </lineage>
</organism>
<dbReference type="EC" id="6.3.4.5"/>
<dbReference type="EMBL" id="AE001572">
    <property type="protein sequence ID" value="AAD19816.1"/>
    <property type="molecule type" value="Genomic_DNA"/>
</dbReference>
<dbReference type="EMBL" id="AE014297">
    <property type="protein sequence ID" value="AAF54103.2"/>
    <property type="molecule type" value="Genomic_DNA"/>
</dbReference>
<dbReference type="EMBL" id="AE014297">
    <property type="protein sequence ID" value="AGB95707.1"/>
    <property type="molecule type" value="Genomic_DNA"/>
</dbReference>
<dbReference type="EMBL" id="BT060440">
    <property type="protein sequence ID" value="ACN22205.1"/>
    <property type="molecule type" value="mRNA"/>
</dbReference>
<dbReference type="RefSeq" id="NP_001262324.1">
    <property type="nucleotide sequence ID" value="NM_001275395.1"/>
</dbReference>
<dbReference type="RefSeq" id="NP_649674.1">
    <property type="nucleotide sequence ID" value="NM_141417.3"/>
</dbReference>
<dbReference type="SMR" id="O97069"/>
<dbReference type="BioGRID" id="66010">
    <property type="interactions" value="1"/>
</dbReference>
<dbReference type="DIP" id="DIP-21101N"/>
<dbReference type="FunCoup" id="O97069">
    <property type="interactions" value="702"/>
</dbReference>
<dbReference type="IntAct" id="O97069">
    <property type="interactions" value="1"/>
</dbReference>
<dbReference type="STRING" id="7227.FBpp0307951"/>
<dbReference type="PaxDb" id="7227-FBpp0081197"/>
<dbReference type="DNASU" id="40812"/>
<dbReference type="EnsemblMetazoa" id="FBtr0081699">
    <property type="protein sequence ID" value="FBpp0081197"/>
    <property type="gene ID" value="FBgn0026565"/>
</dbReference>
<dbReference type="EnsemblMetazoa" id="FBtr0337022">
    <property type="protein sequence ID" value="FBpp0307951"/>
    <property type="gene ID" value="FBgn0026565"/>
</dbReference>
<dbReference type="GeneID" id="40812"/>
<dbReference type="KEGG" id="dme:Dmel_CG1315"/>
<dbReference type="AGR" id="FB:FBgn0026565"/>
<dbReference type="CTD" id="40812"/>
<dbReference type="FlyBase" id="FBgn0026565">
    <property type="gene designation" value="Ass"/>
</dbReference>
<dbReference type="VEuPathDB" id="VectorBase:FBgn0026565"/>
<dbReference type="eggNOG" id="KOG1706">
    <property type="taxonomic scope" value="Eukaryota"/>
</dbReference>
<dbReference type="GeneTree" id="ENSGT00390000004524"/>
<dbReference type="HOGENOM" id="CLU_032784_4_2_1"/>
<dbReference type="InParanoid" id="O97069"/>
<dbReference type="OMA" id="WRWTVSP"/>
<dbReference type="OrthoDB" id="1688907at2759"/>
<dbReference type="PhylomeDB" id="O97069"/>
<dbReference type="UniPathway" id="UPA00068">
    <property type="reaction ID" value="UER00113"/>
</dbReference>
<dbReference type="UniPathway" id="UPA00158">
    <property type="reaction ID" value="UER00272"/>
</dbReference>
<dbReference type="BioGRID-ORCS" id="40812">
    <property type="hits" value="0 hits in 3 CRISPR screens"/>
</dbReference>
<dbReference type="GenomeRNAi" id="40812"/>
<dbReference type="PRO" id="PR:O97069"/>
<dbReference type="Proteomes" id="UP000000803">
    <property type="component" value="Chromosome 3R"/>
</dbReference>
<dbReference type="Bgee" id="FBgn0026565">
    <property type="expression patterns" value="Expressed in adult Malpighian tubule (Drosophila) and 28 other cell types or tissues"/>
</dbReference>
<dbReference type="GO" id="GO:0005737">
    <property type="term" value="C:cytoplasm"/>
    <property type="evidence" value="ECO:0000318"/>
    <property type="project" value="GO_Central"/>
</dbReference>
<dbReference type="GO" id="GO:0004055">
    <property type="term" value="F:argininosuccinate synthase activity"/>
    <property type="evidence" value="ECO:0000318"/>
    <property type="project" value="GO_Central"/>
</dbReference>
<dbReference type="GO" id="GO:0005524">
    <property type="term" value="F:ATP binding"/>
    <property type="evidence" value="ECO:0007669"/>
    <property type="project" value="UniProtKB-KW"/>
</dbReference>
<dbReference type="GO" id="GO:0000053">
    <property type="term" value="P:argininosuccinate metabolic process"/>
    <property type="evidence" value="ECO:0000318"/>
    <property type="project" value="GO_Central"/>
</dbReference>
<dbReference type="GO" id="GO:0006526">
    <property type="term" value="P:L-arginine biosynthetic process"/>
    <property type="evidence" value="ECO:0000318"/>
    <property type="project" value="GO_Central"/>
</dbReference>
<dbReference type="GO" id="GO:0000050">
    <property type="term" value="P:urea cycle"/>
    <property type="evidence" value="ECO:0000318"/>
    <property type="project" value="GO_Central"/>
</dbReference>
<dbReference type="CDD" id="cd01999">
    <property type="entry name" value="ASS"/>
    <property type="match status" value="1"/>
</dbReference>
<dbReference type="FunFam" id="3.40.50.620:FF:000019">
    <property type="entry name" value="Argininosuccinate synthase"/>
    <property type="match status" value="1"/>
</dbReference>
<dbReference type="FunFam" id="3.90.1260.10:FF:000003">
    <property type="entry name" value="Argininosuccinate synthase"/>
    <property type="match status" value="1"/>
</dbReference>
<dbReference type="Gene3D" id="3.90.1260.10">
    <property type="entry name" value="Argininosuccinate synthetase, chain A, domain 2"/>
    <property type="match status" value="1"/>
</dbReference>
<dbReference type="Gene3D" id="3.40.50.620">
    <property type="entry name" value="HUPs"/>
    <property type="match status" value="1"/>
</dbReference>
<dbReference type="HAMAP" id="MF_00005">
    <property type="entry name" value="Arg_succ_synth_type1"/>
    <property type="match status" value="1"/>
</dbReference>
<dbReference type="InterPro" id="IPR048268">
    <property type="entry name" value="Arginosuc_syn_C"/>
</dbReference>
<dbReference type="InterPro" id="IPR048267">
    <property type="entry name" value="Arginosuc_syn_N"/>
</dbReference>
<dbReference type="InterPro" id="IPR001518">
    <property type="entry name" value="Arginosuc_synth"/>
</dbReference>
<dbReference type="InterPro" id="IPR018223">
    <property type="entry name" value="Arginosuc_synth_CS"/>
</dbReference>
<dbReference type="InterPro" id="IPR023434">
    <property type="entry name" value="Arginosuc_synth_type_1_subfam"/>
</dbReference>
<dbReference type="InterPro" id="IPR024074">
    <property type="entry name" value="AS_cat/multimer_dom_body"/>
</dbReference>
<dbReference type="InterPro" id="IPR014729">
    <property type="entry name" value="Rossmann-like_a/b/a_fold"/>
</dbReference>
<dbReference type="NCBIfam" id="TIGR00032">
    <property type="entry name" value="argG"/>
    <property type="match status" value="1"/>
</dbReference>
<dbReference type="NCBIfam" id="NF001770">
    <property type="entry name" value="PRK00509.1"/>
    <property type="match status" value="1"/>
</dbReference>
<dbReference type="PANTHER" id="PTHR11587">
    <property type="entry name" value="ARGININOSUCCINATE SYNTHASE"/>
    <property type="match status" value="1"/>
</dbReference>
<dbReference type="PANTHER" id="PTHR11587:SF2">
    <property type="entry name" value="ARGININOSUCCINATE SYNTHASE"/>
    <property type="match status" value="1"/>
</dbReference>
<dbReference type="Pfam" id="PF20979">
    <property type="entry name" value="Arginosuc_syn_C"/>
    <property type="match status" value="1"/>
</dbReference>
<dbReference type="Pfam" id="PF00764">
    <property type="entry name" value="Arginosuc_synth"/>
    <property type="match status" value="1"/>
</dbReference>
<dbReference type="SUPFAM" id="SSF52402">
    <property type="entry name" value="Adenine nucleotide alpha hydrolases-like"/>
    <property type="match status" value="1"/>
</dbReference>
<dbReference type="SUPFAM" id="SSF69864">
    <property type="entry name" value="Argininosuccinate synthetase, C-terminal domain"/>
    <property type="match status" value="1"/>
</dbReference>
<dbReference type="PROSITE" id="PS00564">
    <property type="entry name" value="ARGININOSUCCIN_SYN_1"/>
    <property type="match status" value="1"/>
</dbReference>
<dbReference type="PROSITE" id="PS00565">
    <property type="entry name" value="ARGININOSUCCIN_SYN_2"/>
    <property type="match status" value="1"/>
</dbReference>
<name>ASSY_DROME</name>
<feature type="chain" id="PRO_0000148557" description="Argininosuccinate synthase">
    <location>
        <begin position="1"/>
        <end position="419"/>
    </location>
</feature>
<feature type="binding site" evidence="1">
    <location>
        <begin position="9"/>
        <end position="17"/>
    </location>
    <ligand>
        <name>ATP</name>
        <dbReference type="ChEBI" id="CHEBI:30616"/>
    </ligand>
</feature>
<feature type="binding site" evidence="1">
    <location>
        <position position="35"/>
    </location>
    <ligand>
        <name>ATP</name>
        <dbReference type="ChEBI" id="CHEBI:30616"/>
    </ligand>
</feature>
<feature type="binding site" evidence="1">
    <location>
        <position position="86"/>
    </location>
    <ligand>
        <name>L-citrulline</name>
        <dbReference type="ChEBI" id="CHEBI:57743"/>
    </ligand>
</feature>
<feature type="binding site" evidence="1">
    <location>
        <position position="91"/>
    </location>
    <ligand>
        <name>L-citrulline</name>
        <dbReference type="ChEBI" id="CHEBI:57743"/>
    </ligand>
</feature>
<feature type="binding site" evidence="1">
    <location>
        <begin position="114"/>
        <end position="122"/>
    </location>
    <ligand>
        <name>ATP</name>
        <dbReference type="ChEBI" id="CHEBI:30616"/>
    </ligand>
</feature>
<feature type="binding site" evidence="1">
    <location>
        <position position="118"/>
    </location>
    <ligand>
        <name>L-aspartate</name>
        <dbReference type="ChEBI" id="CHEBI:29991"/>
    </ligand>
</feature>
<feature type="binding site" evidence="1">
    <location>
        <position position="122"/>
    </location>
    <ligand>
        <name>L-aspartate</name>
        <dbReference type="ChEBI" id="CHEBI:29991"/>
    </ligand>
</feature>
<feature type="binding site" evidence="1">
    <location>
        <position position="122"/>
    </location>
    <ligand>
        <name>L-citrulline</name>
        <dbReference type="ChEBI" id="CHEBI:57743"/>
    </ligand>
</feature>
<feature type="binding site" evidence="1">
    <location>
        <position position="123"/>
    </location>
    <ligand>
        <name>L-aspartate</name>
        <dbReference type="ChEBI" id="CHEBI:29991"/>
    </ligand>
</feature>
<feature type="binding site" evidence="1">
    <location>
        <position position="126"/>
    </location>
    <ligand>
        <name>L-citrulline</name>
        <dbReference type="ChEBI" id="CHEBI:57743"/>
    </ligand>
</feature>
<feature type="binding site" evidence="1">
    <location>
        <position position="179"/>
    </location>
    <ligand>
        <name>L-citrulline</name>
        <dbReference type="ChEBI" id="CHEBI:57743"/>
    </ligand>
</feature>
<feature type="binding site" evidence="1">
    <location>
        <position position="188"/>
    </location>
    <ligand>
        <name>L-citrulline</name>
        <dbReference type="ChEBI" id="CHEBI:57743"/>
    </ligand>
</feature>
<feature type="binding site" evidence="1">
    <location>
        <position position="270"/>
    </location>
    <ligand>
        <name>L-citrulline</name>
        <dbReference type="ChEBI" id="CHEBI:57743"/>
    </ligand>
</feature>
<feature type="binding site" evidence="1">
    <location>
        <position position="282"/>
    </location>
    <ligand>
        <name>L-citrulline</name>
        <dbReference type="ChEBI" id="CHEBI:57743"/>
    </ligand>
</feature>
<sequence>MPKETVILAYSGGLDTSCVLKWLLDKQYEVICVLADVGQKEDFTAAEKKALKIGAKKVIVADVKQSFVEDYIWPAVQMGLVYEERYLLGTSLARPCISVALMEVAREYGAKYLAHGATGKGNDQVRFELCAYALKPDLKIIAPWRDVEFCCQFQGRQDLIAYAQQHGIEVSAKPATPWSTDANILHISYESGILEDPNTVAPENLYEMTVDPLTRAPRDPVHLVIQFDRGLPSSVEDLPGGRVYTKPLEMLDFLNKLGGSYGIGRIDIVENRFVGLKSRGVYETPGGTILFAAHQDLEVFALDREVLRTKQVLRDRMADYVYNGFWFSPEAIYARKCIELAEQRVSGKVTVELAPGYCRAIARKAAKDVGALYNEQLVSMDVHGGYVPQDAGGFIAINAVRIREHVRAFGAYDVPTKKN</sequence>